<dbReference type="EC" id="2.1.3.15" evidence="1"/>
<dbReference type="EMBL" id="CP000381">
    <property type="protein sequence ID" value="ABX73238.1"/>
    <property type="molecule type" value="Genomic_DNA"/>
</dbReference>
<dbReference type="RefSeq" id="WP_002256629.1">
    <property type="nucleotide sequence ID" value="NC_010120.1"/>
</dbReference>
<dbReference type="SMR" id="A9LZ61"/>
<dbReference type="KEGG" id="nmn:NMCC_1058"/>
<dbReference type="HOGENOM" id="CLU_015486_0_2_4"/>
<dbReference type="UniPathway" id="UPA00655">
    <property type="reaction ID" value="UER00711"/>
</dbReference>
<dbReference type="Proteomes" id="UP000001177">
    <property type="component" value="Chromosome"/>
</dbReference>
<dbReference type="GO" id="GO:0009317">
    <property type="term" value="C:acetyl-CoA carboxylase complex"/>
    <property type="evidence" value="ECO:0007669"/>
    <property type="project" value="InterPro"/>
</dbReference>
<dbReference type="GO" id="GO:0003989">
    <property type="term" value="F:acetyl-CoA carboxylase activity"/>
    <property type="evidence" value="ECO:0007669"/>
    <property type="project" value="InterPro"/>
</dbReference>
<dbReference type="GO" id="GO:0005524">
    <property type="term" value="F:ATP binding"/>
    <property type="evidence" value="ECO:0007669"/>
    <property type="project" value="UniProtKB-KW"/>
</dbReference>
<dbReference type="GO" id="GO:0016743">
    <property type="term" value="F:carboxyl- or carbamoyltransferase activity"/>
    <property type="evidence" value="ECO:0007669"/>
    <property type="project" value="UniProtKB-UniRule"/>
</dbReference>
<dbReference type="GO" id="GO:0006633">
    <property type="term" value="P:fatty acid biosynthetic process"/>
    <property type="evidence" value="ECO:0007669"/>
    <property type="project" value="UniProtKB-KW"/>
</dbReference>
<dbReference type="GO" id="GO:2001295">
    <property type="term" value="P:malonyl-CoA biosynthetic process"/>
    <property type="evidence" value="ECO:0007669"/>
    <property type="project" value="UniProtKB-UniRule"/>
</dbReference>
<dbReference type="Gene3D" id="3.90.226.10">
    <property type="entry name" value="2-enoyl-CoA Hydratase, Chain A, domain 1"/>
    <property type="match status" value="1"/>
</dbReference>
<dbReference type="HAMAP" id="MF_00823">
    <property type="entry name" value="AcetylCoA_CT_alpha"/>
    <property type="match status" value="1"/>
</dbReference>
<dbReference type="InterPro" id="IPR001095">
    <property type="entry name" value="Acetyl_CoA_COase_a_su"/>
</dbReference>
<dbReference type="InterPro" id="IPR029045">
    <property type="entry name" value="ClpP/crotonase-like_dom_sf"/>
</dbReference>
<dbReference type="InterPro" id="IPR011763">
    <property type="entry name" value="COA_CT_C"/>
</dbReference>
<dbReference type="NCBIfam" id="TIGR00513">
    <property type="entry name" value="accA"/>
    <property type="match status" value="1"/>
</dbReference>
<dbReference type="NCBIfam" id="NF041504">
    <property type="entry name" value="AccA_sub"/>
    <property type="match status" value="1"/>
</dbReference>
<dbReference type="NCBIfam" id="NF004344">
    <property type="entry name" value="PRK05724.1"/>
    <property type="match status" value="1"/>
</dbReference>
<dbReference type="PANTHER" id="PTHR42853">
    <property type="entry name" value="ACETYL-COENZYME A CARBOXYLASE CARBOXYL TRANSFERASE SUBUNIT ALPHA"/>
    <property type="match status" value="1"/>
</dbReference>
<dbReference type="PANTHER" id="PTHR42853:SF3">
    <property type="entry name" value="ACETYL-COENZYME A CARBOXYLASE CARBOXYL TRANSFERASE SUBUNIT ALPHA, CHLOROPLASTIC"/>
    <property type="match status" value="1"/>
</dbReference>
<dbReference type="Pfam" id="PF03255">
    <property type="entry name" value="ACCA"/>
    <property type="match status" value="1"/>
</dbReference>
<dbReference type="PRINTS" id="PR01069">
    <property type="entry name" value="ACCCTRFRASEA"/>
</dbReference>
<dbReference type="SUPFAM" id="SSF52096">
    <property type="entry name" value="ClpP/crotonase"/>
    <property type="match status" value="1"/>
</dbReference>
<dbReference type="PROSITE" id="PS50989">
    <property type="entry name" value="COA_CT_CTER"/>
    <property type="match status" value="1"/>
</dbReference>
<feature type="chain" id="PRO_1000083931" description="Acetyl-coenzyme A carboxylase carboxyl transferase subunit alpha">
    <location>
        <begin position="1"/>
        <end position="319"/>
    </location>
</feature>
<feature type="domain" description="CoA carboxyltransferase C-terminal" evidence="2">
    <location>
        <begin position="39"/>
        <end position="293"/>
    </location>
</feature>
<accession>A9LZ61</accession>
<evidence type="ECO:0000255" key="1">
    <source>
        <dbReference type="HAMAP-Rule" id="MF_00823"/>
    </source>
</evidence>
<evidence type="ECO:0000255" key="2">
    <source>
        <dbReference type="PROSITE-ProRule" id="PRU01137"/>
    </source>
</evidence>
<sequence length="319" mass="35459">MKPVFLDFEQPIAELTNKIDELRFVQDESAVDISDEIHRLQKKSNDLTKSIFSKLTPAQVSQVSRHPQRPYTLDYIEALFTDFEELHGDRHFADDYAIVGGLARFNGQSVMVVGHQKGRDTKEKIRRNFGMPRPEGYRKALRLMKTAEKFGLPVMTFIDTPGAYPGIGAEERGQSEAIGKNLYELTRLHVPVLCTVIGEGGSGGALAVAVGDYVNMLQYSTYSVISPEGCASILWKTAEKAADAAQALGITADRLQKLDLVDTVIKEPLGGAHRDFGQTMKNVKAVLEKQLHEAQSIPLADLLSRRFDRIMAYGKFSEQ</sequence>
<keyword id="KW-0067">ATP-binding</keyword>
<keyword id="KW-0963">Cytoplasm</keyword>
<keyword id="KW-0275">Fatty acid biosynthesis</keyword>
<keyword id="KW-0276">Fatty acid metabolism</keyword>
<keyword id="KW-0444">Lipid biosynthesis</keyword>
<keyword id="KW-0443">Lipid metabolism</keyword>
<keyword id="KW-0547">Nucleotide-binding</keyword>
<keyword id="KW-0808">Transferase</keyword>
<protein>
    <recommendedName>
        <fullName evidence="1">Acetyl-coenzyme A carboxylase carboxyl transferase subunit alpha</fullName>
        <shortName evidence="1">ACCase subunit alpha</shortName>
        <shortName evidence="1">Acetyl-CoA carboxylase carboxyltransferase subunit alpha</shortName>
        <ecNumber evidence="1">2.1.3.15</ecNumber>
    </recommendedName>
</protein>
<reference key="1">
    <citation type="journal article" date="2008" name="Genomics">
        <title>Characterization of ST-4821 complex, a unique Neisseria meningitidis clone.</title>
        <authorList>
            <person name="Peng J."/>
            <person name="Yang L."/>
            <person name="Yang F."/>
            <person name="Yang J."/>
            <person name="Yan Y."/>
            <person name="Nie H."/>
            <person name="Zhang X."/>
            <person name="Xiong Z."/>
            <person name="Jiang Y."/>
            <person name="Cheng F."/>
            <person name="Xu X."/>
            <person name="Chen S."/>
            <person name="Sun L."/>
            <person name="Li W."/>
            <person name="Shen Y."/>
            <person name="Shao Z."/>
            <person name="Liang X."/>
            <person name="Xu J."/>
            <person name="Jin Q."/>
        </authorList>
    </citation>
    <scope>NUCLEOTIDE SEQUENCE [LARGE SCALE GENOMIC DNA]</scope>
    <source>
        <strain>053442</strain>
    </source>
</reference>
<comment type="function">
    <text evidence="1">Component of the acetyl coenzyme A carboxylase (ACC) complex. First, biotin carboxylase catalyzes the carboxylation of biotin on its carrier protein (BCCP) and then the CO(2) group is transferred by the carboxyltransferase to acetyl-CoA to form malonyl-CoA.</text>
</comment>
<comment type="catalytic activity">
    <reaction evidence="1">
        <text>N(6)-carboxybiotinyl-L-lysyl-[protein] + acetyl-CoA = N(6)-biotinyl-L-lysyl-[protein] + malonyl-CoA</text>
        <dbReference type="Rhea" id="RHEA:54728"/>
        <dbReference type="Rhea" id="RHEA-COMP:10505"/>
        <dbReference type="Rhea" id="RHEA-COMP:10506"/>
        <dbReference type="ChEBI" id="CHEBI:57288"/>
        <dbReference type="ChEBI" id="CHEBI:57384"/>
        <dbReference type="ChEBI" id="CHEBI:83144"/>
        <dbReference type="ChEBI" id="CHEBI:83145"/>
        <dbReference type="EC" id="2.1.3.15"/>
    </reaction>
</comment>
<comment type="pathway">
    <text evidence="1">Lipid metabolism; malonyl-CoA biosynthesis; malonyl-CoA from acetyl-CoA: step 1/1.</text>
</comment>
<comment type="subunit">
    <text evidence="1">Acetyl-CoA carboxylase is a heterohexamer composed of biotin carboxyl carrier protein (AccB), biotin carboxylase (AccC) and two subunits each of ACCase subunit alpha (AccA) and ACCase subunit beta (AccD).</text>
</comment>
<comment type="subcellular location">
    <subcellularLocation>
        <location evidence="1">Cytoplasm</location>
    </subcellularLocation>
</comment>
<comment type="similarity">
    <text evidence="1">Belongs to the AccA family.</text>
</comment>
<gene>
    <name evidence="1" type="primary">accA</name>
    <name type="ordered locus">NMCC_1058</name>
</gene>
<name>ACCA_NEIM0</name>
<proteinExistence type="inferred from homology"/>
<organism>
    <name type="scientific">Neisseria meningitidis serogroup C (strain 053442)</name>
    <dbReference type="NCBI Taxonomy" id="374833"/>
    <lineage>
        <taxon>Bacteria</taxon>
        <taxon>Pseudomonadati</taxon>
        <taxon>Pseudomonadota</taxon>
        <taxon>Betaproteobacteria</taxon>
        <taxon>Neisseriales</taxon>
        <taxon>Neisseriaceae</taxon>
        <taxon>Neisseria</taxon>
    </lineage>
</organism>